<protein>
    <recommendedName>
        <fullName evidence="3">Conotoxin Lt5.8</fullName>
    </recommendedName>
    <alternativeName>
        <fullName evidence="6">Lt5h</fullName>
    </alternativeName>
</protein>
<proteinExistence type="inferred from homology"/>
<comment type="subcellular location">
    <subcellularLocation>
        <location evidence="5">Secreted</location>
    </subcellularLocation>
</comment>
<comment type="tissue specificity">
    <text evidence="5">Expressed by the venom duct.</text>
</comment>
<comment type="domain">
    <text evidence="4">The cysteine framework is V (CC-CC).</text>
</comment>
<comment type="PTM">
    <text evidence="4">Contains 2 disulfide bonds that can be either 'C1-C3, C2-C4' or 'C1-C4, C2-C3', since these disulfide connectivities have been observed for conotoxins with cysteine framework V (for examples, see AC P0DQQ7 and AC P81755).</text>
</comment>
<comment type="similarity">
    <text evidence="4">Belongs to the conotoxin T superfamily.</text>
</comment>
<accession>Q1A3Q5</accession>
<keyword id="KW-0027">Amidation</keyword>
<keyword id="KW-0165">Cleavage on pair of basic residues</keyword>
<keyword id="KW-1015">Disulfide bond</keyword>
<keyword id="KW-0873">Pyrrolidone carboxylic acid</keyword>
<keyword id="KW-0964">Secreted</keyword>
<keyword id="KW-0732">Signal</keyword>
<keyword id="KW-0800">Toxin</keyword>
<dbReference type="EMBL" id="DQ345359">
    <property type="protein sequence ID" value="ABC70195.1"/>
    <property type="molecule type" value="mRNA"/>
</dbReference>
<dbReference type="ConoServer" id="1146">
    <property type="toxin name" value="Lt5h precursor"/>
</dbReference>
<dbReference type="GO" id="GO:0005576">
    <property type="term" value="C:extracellular region"/>
    <property type="evidence" value="ECO:0007669"/>
    <property type="project" value="UniProtKB-SubCell"/>
</dbReference>
<dbReference type="GO" id="GO:0090729">
    <property type="term" value="F:toxin activity"/>
    <property type="evidence" value="ECO:0007669"/>
    <property type="project" value="UniProtKB-KW"/>
</dbReference>
<dbReference type="InterPro" id="IPR031565">
    <property type="entry name" value="T-conotoxin"/>
</dbReference>
<dbReference type="Pfam" id="PF16981">
    <property type="entry name" value="Chi-conotoxin"/>
    <property type="match status" value="1"/>
</dbReference>
<name>CT58_CONLT</name>
<feature type="signal peptide" evidence="2">
    <location>
        <begin position="1"/>
        <end position="19"/>
    </location>
</feature>
<feature type="propeptide" id="PRO_0000315435" evidence="1">
    <location>
        <begin position="20"/>
        <end position="47"/>
    </location>
</feature>
<feature type="peptide" id="PRO_0000315436" description="Conotoxin Lt5.8">
    <location>
        <begin position="50"/>
        <end position="61"/>
    </location>
</feature>
<feature type="modified residue" description="Pyrrolidone carboxylic acid" evidence="1">
    <location>
        <position position="50"/>
    </location>
</feature>
<feature type="modified residue" description="Glutamine amide" evidence="2">
    <location>
        <position position="61"/>
    </location>
</feature>
<evidence type="ECO:0000250" key="1"/>
<evidence type="ECO:0000255" key="2"/>
<evidence type="ECO:0000303" key="3">
    <source>
    </source>
</evidence>
<evidence type="ECO:0000305" key="4"/>
<evidence type="ECO:0000305" key="5">
    <source>
    </source>
</evidence>
<evidence type="ECO:0000312" key="6">
    <source>
        <dbReference type="EMBL" id="ABC70195.1"/>
    </source>
</evidence>
<sequence length="62" mass="7023">MLCLPVFIILLLLVSPAATMPVDLEILKAPTKESRKDFEMRIELLRSKRQCCRPANMSCCQG</sequence>
<organism>
    <name type="scientific">Conus litteratus</name>
    <name type="common">Lettered cone</name>
    <dbReference type="NCBI Taxonomy" id="89445"/>
    <lineage>
        <taxon>Eukaryota</taxon>
        <taxon>Metazoa</taxon>
        <taxon>Spiralia</taxon>
        <taxon>Lophotrochozoa</taxon>
        <taxon>Mollusca</taxon>
        <taxon>Gastropoda</taxon>
        <taxon>Caenogastropoda</taxon>
        <taxon>Neogastropoda</taxon>
        <taxon>Conoidea</taxon>
        <taxon>Conidae</taxon>
        <taxon>Conus</taxon>
        <taxon>Elisaconus</taxon>
    </lineage>
</organism>
<reference key="1">
    <citation type="journal article" date="2006" name="Genomics">
        <title>Diversity and evolution of conotoxins based on gene expression profiling of Conus litteratus.</title>
        <authorList>
            <person name="Pi C."/>
            <person name="Liu J."/>
            <person name="Peng C."/>
            <person name="Liu Y."/>
            <person name="Jiang X."/>
            <person name="Zhao Y."/>
            <person name="Tang S."/>
            <person name="Wang L."/>
            <person name="Dong M."/>
            <person name="Chen S."/>
            <person name="Xu A."/>
        </authorList>
    </citation>
    <scope>NUCLEOTIDE SEQUENCE [MRNA]</scope>
    <source>
        <tissue>Venom duct</tissue>
    </source>
</reference>